<accession>P39439</accession>
<keyword id="KW-0963">Cytoplasm</keyword>
<keyword id="KW-0238">DNA-binding</keyword>
<keyword id="KW-0678">Repressor</keyword>
<keyword id="KW-0804">Transcription</keyword>
<keyword id="KW-0805">Transcription regulation</keyword>
<feature type="chain" id="PRO_0000196497" description="Trp operon repressor">
    <location>
        <begin position="1"/>
        <end position="108"/>
    </location>
</feature>
<feature type="DNA-binding region" evidence="1">
    <location>
        <begin position="68"/>
        <end position="91"/>
    </location>
</feature>
<evidence type="ECO:0000250" key="1"/>
<evidence type="ECO:0000305" key="2"/>
<protein>
    <recommendedName>
        <fullName>Trp operon repressor</fullName>
    </recommendedName>
</protein>
<organism>
    <name type="scientific">Klebsiella aerogenes</name>
    <name type="common">Enterobacter aerogenes</name>
    <dbReference type="NCBI Taxonomy" id="548"/>
    <lineage>
        <taxon>Bacteria</taxon>
        <taxon>Pseudomonadati</taxon>
        <taxon>Pseudomonadota</taxon>
        <taxon>Gammaproteobacteria</taxon>
        <taxon>Enterobacterales</taxon>
        <taxon>Enterobacteriaceae</taxon>
        <taxon>Klebsiella/Raoultella group</taxon>
        <taxon>Klebsiella</taxon>
    </lineage>
</organism>
<reference key="1">
    <citation type="journal article" date="1994" name="Nucleic Acids Res.">
        <title>The tryptophan repressor sequence is highly conserved among the Enterobacteriaceae.</title>
        <authorList>
            <person name="Arvidson D.N."/>
            <person name="Arvidson C.G."/>
            <person name="Lawson C.L."/>
            <person name="Miner J."/>
            <person name="Adams C."/>
            <person name="Youderian P."/>
        </authorList>
    </citation>
    <scope>NUCLEOTIDE SEQUENCE [GENOMIC DNA]</scope>
</reference>
<sequence>MTQQSPYSAAVAEQRHQEWLRFVALLQQAYAEDLHLPLLQLMLTPDEREALGTRVRIIEELLRGEMSQRELKNELGAGIATITRGSNSLKSAPVELRQWLEQTLLNDK</sequence>
<gene>
    <name type="primary">trpR</name>
</gene>
<name>TRPR_KLEAE</name>
<comment type="function">
    <text>This protein is an aporepressor. When complexed with L-tryptophan it binds the operator region of the trp operon (5'-ACTAGT-'3') and prevents the initiation of transcription. The complex also regulates trp repressor biosynthesis by binding to its regulatory region.</text>
</comment>
<comment type="subunit">
    <text>Homodimer.</text>
</comment>
<comment type="subcellular location">
    <subcellularLocation>
        <location>Cytoplasm</location>
    </subcellularLocation>
</comment>
<comment type="similarity">
    <text evidence="2">Belongs to the TrpR family.</text>
</comment>
<proteinExistence type="inferred from homology"/>
<dbReference type="EMBL" id="L26582">
    <property type="protein sequence ID" value="AAC36892.1"/>
    <property type="molecule type" value="Unassigned_DNA"/>
</dbReference>
<dbReference type="PIR" id="S45254">
    <property type="entry name" value="S45254"/>
</dbReference>
<dbReference type="RefSeq" id="WP_015368371.1">
    <property type="nucleotide sequence ID" value="NZ_WPHE01000007.1"/>
</dbReference>
<dbReference type="SMR" id="P39439"/>
<dbReference type="STRING" id="548.EAG7_03372"/>
<dbReference type="GeneID" id="93310308"/>
<dbReference type="OMA" id="MSHEPEY"/>
<dbReference type="GO" id="GO:0005737">
    <property type="term" value="C:cytoplasm"/>
    <property type="evidence" value="ECO:0007669"/>
    <property type="project" value="UniProtKB-SubCell"/>
</dbReference>
<dbReference type="GO" id="GO:0003700">
    <property type="term" value="F:DNA-binding transcription factor activity"/>
    <property type="evidence" value="ECO:0007669"/>
    <property type="project" value="InterPro"/>
</dbReference>
<dbReference type="GO" id="GO:0043565">
    <property type="term" value="F:sequence-specific DNA binding"/>
    <property type="evidence" value="ECO:0007669"/>
    <property type="project" value="InterPro"/>
</dbReference>
<dbReference type="GO" id="GO:0045892">
    <property type="term" value="P:negative regulation of DNA-templated transcription"/>
    <property type="evidence" value="ECO:0007669"/>
    <property type="project" value="UniProtKB-UniRule"/>
</dbReference>
<dbReference type="FunFam" id="1.10.1270.10:FF:000001">
    <property type="entry name" value="Trp operon repressor"/>
    <property type="match status" value="1"/>
</dbReference>
<dbReference type="Gene3D" id="1.10.1270.10">
    <property type="entry name" value="TrpR-like"/>
    <property type="match status" value="1"/>
</dbReference>
<dbReference type="HAMAP" id="MF_00475">
    <property type="entry name" value="Trp_repressor"/>
    <property type="match status" value="1"/>
</dbReference>
<dbReference type="InterPro" id="IPR000831">
    <property type="entry name" value="Trp_repress"/>
</dbReference>
<dbReference type="InterPro" id="IPR013335">
    <property type="entry name" value="Trp_repress_bac"/>
</dbReference>
<dbReference type="InterPro" id="IPR010921">
    <property type="entry name" value="Trp_repressor/repl_initiator"/>
</dbReference>
<dbReference type="InterPro" id="IPR038116">
    <property type="entry name" value="TrpR-like_sf"/>
</dbReference>
<dbReference type="NCBIfam" id="TIGR01321">
    <property type="entry name" value="TrpR"/>
    <property type="match status" value="1"/>
</dbReference>
<dbReference type="PANTHER" id="PTHR38025">
    <property type="entry name" value="TRP OPERON REPRESSOR"/>
    <property type="match status" value="1"/>
</dbReference>
<dbReference type="PANTHER" id="PTHR38025:SF1">
    <property type="entry name" value="TRP OPERON REPRESSOR"/>
    <property type="match status" value="1"/>
</dbReference>
<dbReference type="Pfam" id="PF01371">
    <property type="entry name" value="Trp_repressor"/>
    <property type="match status" value="1"/>
</dbReference>
<dbReference type="PIRSF" id="PIRSF003196">
    <property type="entry name" value="Trp_repressor"/>
    <property type="match status" value="1"/>
</dbReference>
<dbReference type="SUPFAM" id="SSF48295">
    <property type="entry name" value="TrpR-like"/>
    <property type="match status" value="1"/>
</dbReference>